<protein>
    <recommendedName>
        <fullName evidence="1">Thymidylate kinase</fullName>
        <ecNumber evidence="1">2.7.4.9</ecNumber>
    </recommendedName>
    <alternativeName>
        <fullName evidence="1">dTMP kinase</fullName>
    </alternativeName>
</protein>
<name>KTHY_MARMS</name>
<proteinExistence type="inferred from homology"/>
<dbReference type="EC" id="2.7.4.9" evidence="1"/>
<dbReference type="EMBL" id="CP000749">
    <property type="protein sequence ID" value="ABR71189.1"/>
    <property type="molecule type" value="Genomic_DNA"/>
</dbReference>
<dbReference type="SMR" id="A6VXL0"/>
<dbReference type="STRING" id="400668.Mmwyl1_2267"/>
<dbReference type="KEGG" id="mmw:Mmwyl1_2267"/>
<dbReference type="eggNOG" id="COG0125">
    <property type="taxonomic scope" value="Bacteria"/>
</dbReference>
<dbReference type="HOGENOM" id="CLU_049131_0_2_6"/>
<dbReference type="OrthoDB" id="9774907at2"/>
<dbReference type="GO" id="GO:0005829">
    <property type="term" value="C:cytosol"/>
    <property type="evidence" value="ECO:0007669"/>
    <property type="project" value="TreeGrafter"/>
</dbReference>
<dbReference type="GO" id="GO:0005524">
    <property type="term" value="F:ATP binding"/>
    <property type="evidence" value="ECO:0007669"/>
    <property type="project" value="UniProtKB-UniRule"/>
</dbReference>
<dbReference type="GO" id="GO:0004798">
    <property type="term" value="F:dTMP kinase activity"/>
    <property type="evidence" value="ECO:0007669"/>
    <property type="project" value="UniProtKB-UniRule"/>
</dbReference>
<dbReference type="GO" id="GO:0006233">
    <property type="term" value="P:dTDP biosynthetic process"/>
    <property type="evidence" value="ECO:0007669"/>
    <property type="project" value="InterPro"/>
</dbReference>
<dbReference type="GO" id="GO:0006235">
    <property type="term" value="P:dTTP biosynthetic process"/>
    <property type="evidence" value="ECO:0007669"/>
    <property type="project" value="UniProtKB-UniRule"/>
</dbReference>
<dbReference type="GO" id="GO:0006227">
    <property type="term" value="P:dUDP biosynthetic process"/>
    <property type="evidence" value="ECO:0007669"/>
    <property type="project" value="TreeGrafter"/>
</dbReference>
<dbReference type="CDD" id="cd01672">
    <property type="entry name" value="TMPK"/>
    <property type="match status" value="1"/>
</dbReference>
<dbReference type="FunFam" id="3.40.50.300:FF:000225">
    <property type="entry name" value="Thymidylate kinase"/>
    <property type="match status" value="1"/>
</dbReference>
<dbReference type="Gene3D" id="3.40.50.300">
    <property type="entry name" value="P-loop containing nucleotide triphosphate hydrolases"/>
    <property type="match status" value="1"/>
</dbReference>
<dbReference type="HAMAP" id="MF_00165">
    <property type="entry name" value="Thymidylate_kinase"/>
    <property type="match status" value="1"/>
</dbReference>
<dbReference type="InterPro" id="IPR027417">
    <property type="entry name" value="P-loop_NTPase"/>
</dbReference>
<dbReference type="InterPro" id="IPR039430">
    <property type="entry name" value="Thymidylate_kin-like_dom"/>
</dbReference>
<dbReference type="InterPro" id="IPR018095">
    <property type="entry name" value="Thymidylate_kin_CS"/>
</dbReference>
<dbReference type="InterPro" id="IPR018094">
    <property type="entry name" value="Thymidylate_kinase"/>
</dbReference>
<dbReference type="NCBIfam" id="TIGR00041">
    <property type="entry name" value="DTMP_kinase"/>
    <property type="match status" value="1"/>
</dbReference>
<dbReference type="PANTHER" id="PTHR10344">
    <property type="entry name" value="THYMIDYLATE KINASE"/>
    <property type="match status" value="1"/>
</dbReference>
<dbReference type="PANTHER" id="PTHR10344:SF4">
    <property type="entry name" value="UMP-CMP KINASE 2, MITOCHONDRIAL"/>
    <property type="match status" value="1"/>
</dbReference>
<dbReference type="Pfam" id="PF02223">
    <property type="entry name" value="Thymidylate_kin"/>
    <property type="match status" value="1"/>
</dbReference>
<dbReference type="SUPFAM" id="SSF52540">
    <property type="entry name" value="P-loop containing nucleoside triphosphate hydrolases"/>
    <property type="match status" value="1"/>
</dbReference>
<dbReference type="PROSITE" id="PS01331">
    <property type="entry name" value="THYMIDYLATE_KINASE"/>
    <property type="match status" value="1"/>
</dbReference>
<reference key="1">
    <citation type="submission" date="2007-06" db="EMBL/GenBank/DDBJ databases">
        <title>Complete sequence of Marinomonas sp. MWYL1.</title>
        <authorList>
            <consortium name="US DOE Joint Genome Institute"/>
            <person name="Copeland A."/>
            <person name="Lucas S."/>
            <person name="Lapidus A."/>
            <person name="Barry K."/>
            <person name="Glavina del Rio T."/>
            <person name="Dalin E."/>
            <person name="Tice H."/>
            <person name="Pitluck S."/>
            <person name="Kiss H."/>
            <person name="Brettin T."/>
            <person name="Bruce D."/>
            <person name="Detter J.C."/>
            <person name="Han C."/>
            <person name="Schmutz J."/>
            <person name="Larimer F."/>
            <person name="Land M."/>
            <person name="Hauser L."/>
            <person name="Kyrpides N."/>
            <person name="Kim E."/>
            <person name="Johnston A.W.B."/>
            <person name="Todd J.D."/>
            <person name="Rogers R."/>
            <person name="Wexler M."/>
            <person name="Bond P.L."/>
            <person name="Li Y."/>
            <person name="Richardson P."/>
        </authorList>
    </citation>
    <scope>NUCLEOTIDE SEQUENCE [LARGE SCALE GENOMIC DNA]</scope>
    <source>
        <strain>MWYL1</strain>
    </source>
</reference>
<sequence length="212" mass="23834">MRGKFISLEGGEGSGKTTAIHFIRQWLDDHKIPYIMTREPGGTPLAEEIRQLVLTPRDESVNDVTELLLVFAARAQHLAEKIQPALEKGTWVISDRFLDSSYVYQGKARGGDIAMLDQLANWVVGDNKPDATLVLDVPVELGQERVVQRQHQDRLDKESFAFHQKVRDGFLERAEADPKRVKIVDASQSLESVKSQIEEQLAKLNEAWAGDC</sequence>
<gene>
    <name evidence="1" type="primary">tmk</name>
    <name type="ordered locus">Mmwyl1_2267</name>
</gene>
<feature type="chain" id="PRO_1000076966" description="Thymidylate kinase">
    <location>
        <begin position="1"/>
        <end position="212"/>
    </location>
</feature>
<feature type="binding site" evidence="1">
    <location>
        <begin position="10"/>
        <end position="17"/>
    </location>
    <ligand>
        <name>ATP</name>
        <dbReference type="ChEBI" id="CHEBI:30616"/>
    </ligand>
</feature>
<accession>A6VXL0</accession>
<organism>
    <name type="scientific">Marinomonas sp. (strain MWYL1)</name>
    <dbReference type="NCBI Taxonomy" id="400668"/>
    <lineage>
        <taxon>Bacteria</taxon>
        <taxon>Pseudomonadati</taxon>
        <taxon>Pseudomonadota</taxon>
        <taxon>Gammaproteobacteria</taxon>
        <taxon>Oceanospirillales</taxon>
        <taxon>Oceanospirillaceae</taxon>
        <taxon>Marinomonas</taxon>
    </lineage>
</organism>
<keyword id="KW-0067">ATP-binding</keyword>
<keyword id="KW-0418">Kinase</keyword>
<keyword id="KW-0545">Nucleotide biosynthesis</keyword>
<keyword id="KW-0547">Nucleotide-binding</keyword>
<keyword id="KW-0808">Transferase</keyword>
<evidence type="ECO:0000255" key="1">
    <source>
        <dbReference type="HAMAP-Rule" id="MF_00165"/>
    </source>
</evidence>
<comment type="function">
    <text evidence="1">Phosphorylation of dTMP to form dTDP in both de novo and salvage pathways of dTTP synthesis.</text>
</comment>
<comment type="catalytic activity">
    <reaction evidence="1">
        <text>dTMP + ATP = dTDP + ADP</text>
        <dbReference type="Rhea" id="RHEA:13517"/>
        <dbReference type="ChEBI" id="CHEBI:30616"/>
        <dbReference type="ChEBI" id="CHEBI:58369"/>
        <dbReference type="ChEBI" id="CHEBI:63528"/>
        <dbReference type="ChEBI" id="CHEBI:456216"/>
        <dbReference type="EC" id="2.7.4.9"/>
    </reaction>
</comment>
<comment type="similarity">
    <text evidence="1">Belongs to the thymidylate kinase family.</text>
</comment>